<reference key="1">
    <citation type="journal article" date="2010" name="Nature">
        <title>The sequence and de novo assembly of the giant panda genome.</title>
        <authorList>
            <person name="Li R."/>
            <person name="Fan W."/>
            <person name="Tian G."/>
            <person name="Zhu H."/>
            <person name="He L."/>
            <person name="Cai J."/>
            <person name="Huang Q."/>
            <person name="Cai Q."/>
            <person name="Li B."/>
            <person name="Bai Y."/>
            <person name="Zhang Z."/>
            <person name="Zhang Y."/>
            <person name="Wang W."/>
            <person name="Li J."/>
            <person name="Wei F."/>
            <person name="Li H."/>
            <person name="Jian M."/>
            <person name="Li J."/>
            <person name="Zhang Z."/>
            <person name="Nielsen R."/>
            <person name="Li D."/>
            <person name="Gu W."/>
            <person name="Yang Z."/>
            <person name="Xuan Z."/>
            <person name="Ryder O.A."/>
            <person name="Leung F.C."/>
            <person name="Zhou Y."/>
            <person name="Cao J."/>
            <person name="Sun X."/>
            <person name="Fu Y."/>
            <person name="Fang X."/>
            <person name="Guo X."/>
            <person name="Wang B."/>
            <person name="Hou R."/>
            <person name="Shen F."/>
            <person name="Mu B."/>
            <person name="Ni P."/>
            <person name="Lin R."/>
            <person name="Qian W."/>
            <person name="Wang G."/>
            <person name="Yu C."/>
            <person name="Nie W."/>
            <person name="Wang J."/>
            <person name="Wu Z."/>
            <person name="Liang H."/>
            <person name="Min J."/>
            <person name="Wu Q."/>
            <person name="Cheng S."/>
            <person name="Ruan J."/>
            <person name="Wang M."/>
            <person name="Shi Z."/>
            <person name="Wen M."/>
            <person name="Liu B."/>
            <person name="Ren X."/>
            <person name="Zheng H."/>
            <person name="Dong D."/>
            <person name="Cook K."/>
            <person name="Shan G."/>
            <person name="Zhang H."/>
            <person name="Kosiol C."/>
            <person name="Xie X."/>
            <person name="Lu Z."/>
            <person name="Zheng H."/>
            <person name="Li Y."/>
            <person name="Steiner C.C."/>
            <person name="Lam T.T."/>
            <person name="Lin S."/>
            <person name="Zhang Q."/>
            <person name="Li G."/>
            <person name="Tian J."/>
            <person name="Gong T."/>
            <person name="Liu H."/>
            <person name="Zhang D."/>
            <person name="Fang L."/>
            <person name="Ye C."/>
            <person name="Zhang J."/>
            <person name="Hu W."/>
            <person name="Xu A."/>
            <person name="Ren Y."/>
            <person name="Zhang G."/>
            <person name="Bruford M.W."/>
            <person name="Li Q."/>
            <person name="Ma L."/>
            <person name="Guo Y."/>
            <person name="An N."/>
            <person name="Hu Y."/>
            <person name="Zheng Y."/>
            <person name="Shi Y."/>
            <person name="Li Z."/>
            <person name="Liu Q."/>
            <person name="Chen Y."/>
            <person name="Zhao J."/>
            <person name="Qu N."/>
            <person name="Zhao S."/>
            <person name="Tian F."/>
            <person name="Wang X."/>
            <person name="Wang H."/>
            <person name="Xu L."/>
            <person name="Liu X."/>
            <person name="Vinar T."/>
            <person name="Wang Y."/>
            <person name="Lam T.W."/>
            <person name="Yiu S.M."/>
            <person name="Liu S."/>
            <person name="Zhang H."/>
            <person name="Li D."/>
            <person name="Huang Y."/>
            <person name="Wang X."/>
            <person name="Yang G."/>
            <person name="Jiang Z."/>
            <person name="Wang J."/>
            <person name="Qin N."/>
            <person name="Li L."/>
            <person name="Li J."/>
            <person name="Bolund L."/>
            <person name="Kristiansen K."/>
            <person name="Wong G.K."/>
            <person name="Olson M."/>
            <person name="Zhang X."/>
            <person name="Li S."/>
            <person name="Yang H."/>
            <person name="Wang J."/>
            <person name="Wang J."/>
        </authorList>
    </citation>
    <scope>NUCLEOTIDE SEQUENCE [LARGE SCALE GENOMIC DNA]</scope>
</reference>
<accession>D2GZV9</accession>
<proteinExistence type="inferred from homology"/>
<keyword id="KW-0106">Calcium</keyword>
<keyword id="KW-1015">Disulfide bond</keyword>
<keyword id="KW-0256">Endoplasmic reticulum</keyword>
<keyword id="KW-0325">Glycoprotein</keyword>
<keyword id="KW-0378">Hydrolase</keyword>
<keyword id="KW-0460">Magnesium</keyword>
<keyword id="KW-1185">Reference proteome</keyword>
<keyword id="KW-0964">Secreted</keyword>
<keyword id="KW-0732">Signal</keyword>
<comment type="function">
    <text evidence="2 3">Hydrolyzes nucleoside diphosphates with a preference for GDP, IDP and UDP compared to ADP and CDP (By similarity). In the lumen of the endoplasmic reticulum, hydrolyzes UDP that acts as an end-product feedback inhibitor of the UDP-Glc:glycoprotein glucosyltransferases. UMP can be transported back by an UDP-sugar antiporter to the cytosol where it is consumed to regenerate UDP-glucose. Therefore, it positively regulates protein reglucosylation by clearing UDP from the ER lumen and by promoting the regeneration of UDP-glucose. Protein reglucosylation is essential to proper glycoprotein folding and quality control in the ER (By similarity).</text>
</comment>
<comment type="catalytic activity">
    <reaction evidence="2">
        <text>a ribonucleoside 5'-diphosphate + H2O = a ribonucleoside 5'-phosphate + phosphate + H(+)</text>
        <dbReference type="Rhea" id="RHEA:36799"/>
        <dbReference type="ChEBI" id="CHEBI:15377"/>
        <dbReference type="ChEBI" id="CHEBI:15378"/>
        <dbReference type="ChEBI" id="CHEBI:43474"/>
        <dbReference type="ChEBI" id="CHEBI:57930"/>
        <dbReference type="ChEBI" id="CHEBI:58043"/>
        <dbReference type="EC" id="3.6.1.6"/>
    </reaction>
    <physiologicalReaction direction="left-to-right" evidence="2">
        <dbReference type="Rhea" id="RHEA:36800"/>
    </physiologicalReaction>
</comment>
<comment type="catalytic activity">
    <reaction evidence="2">
        <text>GDP + H2O = GMP + phosphate + H(+)</text>
        <dbReference type="Rhea" id="RHEA:22156"/>
        <dbReference type="ChEBI" id="CHEBI:15377"/>
        <dbReference type="ChEBI" id="CHEBI:15378"/>
        <dbReference type="ChEBI" id="CHEBI:43474"/>
        <dbReference type="ChEBI" id="CHEBI:58115"/>
        <dbReference type="ChEBI" id="CHEBI:58189"/>
        <dbReference type="EC" id="3.6.1.6"/>
    </reaction>
    <physiologicalReaction direction="left-to-right" evidence="2">
        <dbReference type="Rhea" id="RHEA:22157"/>
    </physiologicalReaction>
</comment>
<comment type="catalytic activity">
    <reaction evidence="2">
        <text>UDP + H2O = UMP + phosphate + H(+)</text>
        <dbReference type="Rhea" id="RHEA:64876"/>
        <dbReference type="ChEBI" id="CHEBI:15377"/>
        <dbReference type="ChEBI" id="CHEBI:15378"/>
        <dbReference type="ChEBI" id="CHEBI:43474"/>
        <dbReference type="ChEBI" id="CHEBI:57865"/>
        <dbReference type="ChEBI" id="CHEBI:58223"/>
        <dbReference type="EC" id="3.6.1.6"/>
    </reaction>
    <physiologicalReaction direction="left-to-right" evidence="2">
        <dbReference type="Rhea" id="RHEA:64877"/>
    </physiologicalReaction>
</comment>
<comment type="catalytic activity">
    <reaction evidence="2">
        <text>IDP + H2O = IMP + phosphate + H(+)</text>
        <dbReference type="Rhea" id="RHEA:35207"/>
        <dbReference type="ChEBI" id="CHEBI:15377"/>
        <dbReference type="ChEBI" id="CHEBI:15378"/>
        <dbReference type="ChEBI" id="CHEBI:43474"/>
        <dbReference type="ChEBI" id="CHEBI:58053"/>
        <dbReference type="ChEBI" id="CHEBI:58280"/>
        <dbReference type="EC" id="3.6.1.6"/>
    </reaction>
    <physiologicalReaction direction="left-to-right" evidence="2">
        <dbReference type="Rhea" id="RHEA:35208"/>
    </physiologicalReaction>
</comment>
<comment type="catalytic activity">
    <reaction evidence="2">
        <text>CDP + H2O = CMP + phosphate + H(+)</text>
        <dbReference type="Rhea" id="RHEA:64880"/>
        <dbReference type="ChEBI" id="CHEBI:15377"/>
        <dbReference type="ChEBI" id="CHEBI:15378"/>
        <dbReference type="ChEBI" id="CHEBI:43474"/>
        <dbReference type="ChEBI" id="CHEBI:58069"/>
        <dbReference type="ChEBI" id="CHEBI:60377"/>
        <dbReference type="EC" id="3.6.1.6"/>
    </reaction>
    <physiologicalReaction direction="left-to-right" evidence="2">
        <dbReference type="Rhea" id="RHEA:64881"/>
    </physiologicalReaction>
</comment>
<comment type="catalytic activity">
    <reaction evidence="2">
        <text>ADP + H2O = AMP + phosphate + H(+)</text>
        <dbReference type="Rhea" id="RHEA:61436"/>
        <dbReference type="ChEBI" id="CHEBI:15377"/>
        <dbReference type="ChEBI" id="CHEBI:15378"/>
        <dbReference type="ChEBI" id="CHEBI:43474"/>
        <dbReference type="ChEBI" id="CHEBI:456215"/>
        <dbReference type="ChEBI" id="CHEBI:456216"/>
        <dbReference type="EC" id="3.6.1.6"/>
    </reaction>
    <physiologicalReaction direction="left-to-right" evidence="2">
        <dbReference type="Rhea" id="RHEA:61437"/>
    </physiologicalReaction>
</comment>
<comment type="cofactor">
    <cofactor evidence="2">
        <name>Ca(2+)</name>
        <dbReference type="ChEBI" id="CHEBI:29108"/>
    </cofactor>
    <cofactor evidence="2">
        <name>Mg(2+)</name>
        <dbReference type="ChEBI" id="CHEBI:18420"/>
    </cofactor>
</comment>
<comment type="pathway">
    <text evidence="3">Protein modification; protein glycosylation.</text>
</comment>
<comment type="subunit">
    <text evidence="2">Monomer; active form. Homodimer; disulfide-linked. Homodimers are enzymatically inactive.</text>
</comment>
<comment type="subcellular location">
    <subcellularLocation>
        <location evidence="3">Endoplasmic reticulum</location>
    </subcellularLocation>
    <subcellularLocation>
        <location evidence="2">Secreted</location>
    </subcellularLocation>
</comment>
<comment type="PTM">
    <text evidence="3">N-glycosylated; high-mannose type.</text>
</comment>
<comment type="similarity">
    <text evidence="5">Belongs to the GDA1/CD39 NTPase family.</text>
</comment>
<gene>
    <name type="primary">ENTPD5</name>
    <name type="ORF">PANDA_002660</name>
</gene>
<sequence>MATTWGAAFFMLVASCVCSTVFHRDQQTWFEGVFLSSMCPINVSASTLYGIMFDAGSTGTRIHIYTFVQKIPGQLPILEGEIFESVKPGLSAFVDQPKQGAETVEELLEVAKDSVPRSHWKRTPVVLKATAGLRLLPEQKAEALLFEVREIFRKSPFLVPDDSVSIMDGSYEGILAWVTVNFLTGQLHGHSQKTVGTLDLGGASTQITFLPQFEKTLEQTPRGYLTSFEMFNSTYKLYTHSYLGFGLKAARLATLGALETEGIDGHTFRSACLPRWLEAEWIFGGVKYQYGGNKEGNEGSGEVGFEPCYAEVLRVVQGKLHQPDEVRKSSFYAFSYYYDRAADTDMIDYETGGVLKVEDFERKAREVCDNLEKFTSGSPFLCMDLSYITALLKDGFGFADSTILQLSKKVNNIETGWALGATFHLLQSLGISH</sequence>
<protein>
    <recommendedName>
        <fullName evidence="3">Ectonucleoside triphosphate diphosphohydrolase 5</fullName>
        <shortName>NTPDase 5</shortName>
        <ecNumber evidence="3">3.6.1.6</ecNumber>
    </recommendedName>
    <alternativeName>
        <fullName>Guanosine-diphosphatase ENTPD5</fullName>
        <shortName>GDPase ENTPD5</shortName>
    </alternativeName>
    <alternativeName>
        <fullName>Uridine-diphosphatase ENTPD5</fullName>
        <shortName>UDPase ENTPD5</shortName>
    </alternativeName>
</protein>
<feature type="signal peptide" evidence="4">
    <location>
        <begin position="1"/>
        <end position="24"/>
    </location>
</feature>
<feature type="chain" id="PRO_0000404540" description="Ectonucleoside triphosphate diphosphohydrolase 5">
    <location>
        <begin position="25"/>
        <end position="433"/>
    </location>
</feature>
<feature type="active site" description="Proton acceptor" evidence="3">
    <location>
        <position position="172"/>
    </location>
</feature>
<feature type="glycosylation site" description="N-linked (GlcNAc...) asparagine" evidence="4">
    <location>
        <position position="232"/>
    </location>
</feature>
<feature type="disulfide bond" evidence="1">
    <location>
        <begin position="272"/>
        <end position="308"/>
    </location>
</feature>
<feature type="disulfide bond" evidence="1">
    <location>
        <begin position="368"/>
        <end position="382"/>
    </location>
</feature>
<organism>
    <name type="scientific">Ailuropoda melanoleuca</name>
    <name type="common">Giant panda</name>
    <dbReference type="NCBI Taxonomy" id="9646"/>
    <lineage>
        <taxon>Eukaryota</taxon>
        <taxon>Metazoa</taxon>
        <taxon>Chordata</taxon>
        <taxon>Craniata</taxon>
        <taxon>Vertebrata</taxon>
        <taxon>Euteleostomi</taxon>
        <taxon>Mammalia</taxon>
        <taxon>Eutheria</taxon>
        <taxon>Laurasiatheria</taxon>
        <taxon>Carnivora</taxon>
        <taxon>Caniformia</taxon>
        <taxon>Ursidae</taxon>
        <taxon>Ailuropoda</taxon>
    </lineage>
</organism>
<evidence type="ECO:0000250" key="1"/>
<evidence type="ECO:0000250" key="2">
    <source>
        <dbReference type="UniProtKB" id="O75356"/>
    </source>
</evidence>
<evidence type="ECO:0000250" key="3">
    <source>
        <dbReference type="UniProtKB" id="Q9WUZ9"/>
    </source>
</evidence>
<evidence type="ECO:0000255" key="4"/>
<evidence type="ECO:0000305" key="5"/>
<dbReference type="EC" id="3.6.1.6" evidence="3"/>
<dbReference type="EMBL" id="GL192398">
    <property type="protein sequence ID" value="EFB27007.1"/>
    <property type="molecule type" value="Genomic_DNA"/>
</dbReference>
<dbReference type="SMR" id="D2GZV9"/>
<dbReference type="STRING" id="9646.ENSAMEP00000019291"/>
<dbReference type="GlyCosmos" id="D2GZV9">
    <property type="glycosylation" value="1 site, No reported glycans"/>
</dbReference>
<dbReference type="eggNOG" id="KOG1385">
    <property type="taxonomic scope" value="Eukaryota"/>
</dbReference>
<dbReference type="InParanoid" id="D2GZV9"/>
<dbReference type="UniPathway" id="UPA00378"/>
<dbReference type="Proteomes" id="UP000008912">
    <property type="component" value="Unassembled WGS sequence"/>
</dbReference>
<dbReference type="GO" id="GO:0005783">
    <property type="term" value="C:endoplasmic reticulum"/>
    <property type="evidence" value="ECO:0000250"/>
    <property type="project" value="UniProtKB"/>
</dbReference>
<dbReference type="GO" id="GO:0005576">
    <property type="term" value="C:extracellular region"/>
    <property type="evidence" value="ECO:0007669"/>
    <property type="project" value="UniProtKB-SubCell"/>
</dbReference>
<dbReference type="GO" id="GO:0043262">
    <property type="term" value="F:ADP phosphatase activity"/>
    <property type="evidence" value="ECO:0007669"/>
    <property type="project" value="RHEA"/>
</dbReference>
<dbReference type="GO" id="GO:0036384">
    <property type="term" value="F:CDP phosphatase activity"/>
    <property type="evidence" value="ECO:0007669"/>
    <property type="project" value="RHEA"/>
</dbReference>
<dbReference type="GO" id="GO:0004382">
    <property type="term" value="F:GDP phosphatase activity"/>
    <property type="evidence" value="ECO:0000250"/>
    <property type="project" value="UniProtKB"/>
</dbReference>
<dbReference type="GO" id="GO:1990003">
    <property type="term" value="F:IDP phosphatase activity"/>
    <property type="evidence" value="ECO:0007669"/>
    <property type="project" value="RHEA"/>
</dbReference>
<dbReference type="GO" id="GO:0045134">
    <property type="term" value="F:UDP phosphatase activity"/>
    <property type="evidence" value="ECO:0000250"/>
    <property type="project" value="UniProtKB"/>
</dbReference>
<dbReference type="GO" id="GO:0051084">
    <property type="term" value="P:'de novo' post-translational protein folding"/>
    <property type="evidence" value="ECO:0000250"/>
    <property type="project" value="UniProtKB"/>
</dbReference>
<dbReference type="GO" id="GO:0006487">
    <property type="term" value="P:protein N-linked glycosylation"/>
    <property type="evidence" value="ECO:0000250"/>
    <property type="project" value="UniProtKB"/>
</dbReference>
<dbReference type="GO" id="GO:0006256">
    <property type="term" value="P:UDP catabolic process"/>
    <property type="evidence" value="ECO:0000250"/>
    <property type="project" value="UniProtKB"/>
</dbReference>
<dbReference type="GO" id="GO:0006011">
    <property type="term" value="P:UDP-alpha-D-glucose metabolic process"/>
    <property type="evidence" value="ECO:0000250"/>
    <property type="project" value="UniProtKB"/>
</dbReference>
<dbReference type="CDD" id="cd24114">
    <property type="entry name" value="ASKHA_NBD_NTPDase5"/>
    <property type="match status" value="1"/>
</dbReference>
<dbReference type="FunFam" id="3.30.420.150:FF:000004">
    <property type="entry name" value="Ectonucleoside triphosphate diphosphohydrolase 5"/>
    <property type="match status" value="1"/>
</dbReference>
<dbReference type="FunFam" id="3.30.420.40:FF:000052">
    <property type="entry name" value="Ectonucleoside triphosphate diphosphohydrolase 5"/>
    <property type="match status" value="1"/>
</dbReference>
<dbReference type="Gene3D" id="3.30.420.40">
    <property type="match status" value="1"/>
</dbReference>
<dbReference type="Gene3D" id="3.30.420.150">
    <property type="entry name" value="Exopolyphosphatase. Domain 2"/>
    <property type="match status" value="1"/>
</dbReference>
<dbReference type="InterPro" id="IPR000407">
    <property type="entry name" value="GDA1_CD39_NTPase"/>
</dbReference>
<dbReference type="PANTHER" id="PTHR11782">
    <property type="entry name" value="ADENOSINE/GUANOSINE DIPHOSPHATASE"/>
    <property type="match status" value="1"/>
</dbReference>
<dbReference type="PANTHER" id="PTHR11782:SF35">
    <property type="entry name" value="NUCLEOSIDE DIPHOSPHATE PHOSPHATASE ENTPD5"/>
    <property type="match status" value="1"/>
</dbReference>
<dbReference type="Pfam" id="PF01150">
    <property type="entry name" value="GDA1_CD39"/>
    <property type="match status" value="1"/>
</dbReference>
<dbReference type="PROSITE" id="PS01238">
    <property type="entry name" value="GDA1_CD39_NTPASE"/>
    <property type="match status" value="1"/>
</dbReference>
<name>ENTP5_AILME</name>